<dbReference type="EC" id="3.5.4.16" evidence="2"/>
<dbReference type="EMBL" id="AL591981">
    <property type="protein sequence ID" value="CAD00011.1"/>
    <property type="molecule type" value="Genomic_DNA"/>
</dbReference>
<dbReference type="PIR" id="AE1316">
    <property type="entry name" value="AE1316"/>
</dbReference>
<dbReference type="RefSeq" id="NP_465457.1">
    <property type="nucleotide sequence ID" value="NC_003210.1"/>
</dbReference>
<dbReference type="RefSeq" id="WP_003724029.1">
    <property type="nucleotide sequence ID" value="NZ_CP149495.1"/>
</dbReference>
<dbReference type="PDB" id="4UQF">
    <property type="method" value="X-ray"/>
    <property type="resolution" value="2.40 A"/>
    <property type="chains" value="A/B/C/D/E/F/G/H/I/J=2-189"/>
</dbReference>
<dbReference type="PDBsum" id="4UQF"/>
<dbReference type="SMR" id="Q8Y5X1"/>
<dbReference type="STRING" id="169963.gene:17594618"/>
<dbReference type="PaxDb" id="169963-lmo1933"/>
<dbReference type="EnsemblBacteria" id="CAD00011">
    <property type="protein sequence ID" value="CAD00011"/>
    <property type="gene ID" value="CAD00011"/>
</dbReference>
<dbReference type="GeneID" id="987987"/>
<dbReference type="KEGG" id="lmo:lmo1933"/>
<dbReference type="PATRIC" id="fig|169963.11.peg.1979"/>
<dbReference type="eggNOG" id="COG0302">
    <property type="taxonomic scope" value="Bacteria"/>
</dbReference>
<dbReference type="HOGENOM" id="CLU_049768_3_3_9"/>
<dbReference type="OrthoDB" id="9801207at2"/>
<dbReference type="PhylomeDB" id="Q8Y5X1"/>
<dbReference type="BioCyc" id="LMON169963:LMO1933-MONOMER"/>
<dbReference type="BRENDA" id="3.5.4.16">
    <property type="organism ID" value="15002"/>
</dbReference>
<dbReference type="UniPathway" id="UPA00848">
    <property type="reaction ID" value="UER00151"/>
</dbReference>
<dbReference type="EvolutionaryTrace" id="Q8Y5X1"/>
<dbReference type="Proteomes" id="UP000000817">
    <property type="component" value="Chromosome"/>
</dbReference>
<dbReference type="GO" id="GO:0005737">
    <property type="term" value="C:cytoplasm"/>
    <property type="evidence" value="ECO:0000318"/>
    <property type="project" value="GO_Central"/>
</dbReference>
<dbReference type="GO" id="GO:0005525">
    <property type="term" value="F:GTP binding"/>
    <property type="evidence" value="ECO:0000318"/>
    <property type="project" value="GO_Central"/>
</dbReference>
<dbReference type="GO" id="GO:0003934">
    <property type="term" value="F:GTP cyclohydrolase I activity"/>
    <property type="evidence" value="ECO:0000318"/>
    <property type="project" value="GO_Central"/>
</dbReference>
<dbReference type="GO" id="GO:0008270">
    <property type="term" value="F:zinc ion binding"/>
    <property type="evidence" value="ECO:0000318"/>
    <property type="project" value="GO_Central"/>
</dbReference>
<dbReference type="GO" id="GO:0006730">
    <property type="term" value="P:one-carbon metabolic process"/>
    <property type="evidence" value="ECO:0007669"/>
    <property type="project" value="UniProtKB-UniRule"/>
</dbReference>
<dbReference type="GO" id="GO:0006729">
    <property type="term" value="P:tetrahydrobiopterin biosynthetic process"/>
    <property type="evidence" value="ECO:0000318"/>
    <property type="project" value="GO_Central"/>
</dbReference>
<dbReference type="GO" id="GO:0046654">
    <property type="term" value="P:tetrahydrofolate biosynthetic process"/>
    <property type="evidence" value="ECO:0007669"/>
    <property type="project" value="UniProtKB-UniRule"/>
</dbReference>
<dbReference type="FunFam" id="1.10.286.10:FF:000001">
    <property type="entry name" value="GTP cyclohydrolase 1"/>
    <property type="match status" value="1"/>
</dbReference>
<dbReference type="FunFam" id="3.30.1130.10:FF:000001">
    <property type="entry name" value="GTP cyclohydrolase 1"/>
    <property type="match status" value="1"/>
</dbReference>
<dbReference type="Gene3D" id="1.10.286.10">
    <property type="match status" value="1"/>
</dbReference>
<dbReference type="Gene3D" id="3.30.1130.10">
    <property type="match status" value="1"/>
</dbReference>
<dbReference type="HAMAP" id="MF_00223">
    <property type="entry name" value="FolE"/>
    <property type="match status" value="1"/>
</dbReference>
<dbReference type="InterPro" id="IPR043133">
    <property type="entry name" value="GTP-CH-I_C/QueF"/>
</dbReference>
<dbReference type="InterPro" id="IPR043134">
    <property type="entry name" value="GTP-CH-I_N"/>
</dbReference>
<dbReference type="InterPro" id="IPR001474">
    <property type="entry name" value="GTP_CycHdrlase_I"/>
</dbReference>
<dbReference type="InterPro" id="IPR018234">
    <property type="entry name" value="GTP_CycHdrlase_I_CS"/>
</dbReference>
<dbReference type="InterPro" id="IPR020602">
    <property type="entry name" value="GTP_CycHdrlase_I_dom"/>
</dbReference>
<dbReference type="NCBIfam" id="TIGR00063">
    <property type="entry name" value="folE"/>
    <property type="match status" value="1"/>
</dbReference>
<dbReference type="NCBIfam" id="NF006825">
    <property type="entry name" value="PRK09347.1-2"/>
    <property type="match status" value="1"/>
</dbReference>
<dbReference type="NCBIfam" id="NF006826">
    <property type="entry name" value="PRK09347.1-3"/>
    <property type="match status" value="1"/>
</dbReference>
<dbReference type="PANTHER" id="PTHR11109:SF7">
    <property type="entry name" value="GTP CYCLOHYDROLASE 1"/>
    <property type="match status" value="1"/>
</dbReference>
<dbReference type="PANTHER" id="PTHR11109">
    <property type="entry name" value="GTP CYCLOHYDROLASE I"/>
    <property type="match status" value="1"/>
</dbReference>
<dbReference type="Pfam" id="PF01227">
    <property type="entry name" value="GTP_cyclohydroI"/>
    <property type="match status" value="1"/>
</dbReference>
<dbReference type="SUPFAM" id="SSF55620">
    <property type="entry name" value="Tetrahydrobiopterin biosynthesis enzymes-like"/>
    <property type="match status" value="1"/>
</dbReference>
<dbReference type="PROSITE" id="PS00859">
    <property type="entry name" value="GTP_CYCLOHYDROL_1_1"/>
    <property type="match status" value="1"/>
</dbReference>
<dbReference type="PROSITE" id="PS00860">
    <property type="entry name" value="GTP_CYCLOHYDROL_1_2"/>
    <property type="match status" value="1"/>
</dbReference>
<organism>
    <name type="scientific">Listeria monocytogenes serovar 1/2a (strain ATCC BAA-679 / EGD-e)</name>
    <dbReference type="NCBI Taxonomy" id="169963"/>
    <lineage>
        <taxon>Bacteria</taxon>
        <taxon>Bacillati</taxon>
        <taxon>Bacillota</taxon>
        <taxon>Bacilli</taxon>
        <taxon>Bacillales</taxon>
        <taxon>Listeriaceae</taxon>
        <taxon>Listeria</taxon>
    </lineage>
</organism>
<name>GCH1_LISMO</name>
<protein>
    <recommendedName>
        <fullName evidence="2">GTP cyclohydrolase 1</fullName>
        <ecNumber evidence="2">3.5.4.16</ecNumber>
    </recommendedName>
    <alternativeName>
        <fullName evidence="2">GTP cyclohydrolase I</fullName>
        <shortName evidence="2">GTP-CH-I</shortName>
    </alternativeName>
</protein>
<feature type="chain" id="PRO_0000119421" description="GTP cyclohydrolase 1">
    <location>
        <begin position="1"/>
        <end position="189"/>
    </location>
</feature>
<feature type="binding site" evidence="2">
    <location>
        <position position="78"/>
    </location>
    <ligand>
        <name>Zn(2+)</name>
        <dbReference type="ChEBI" id="CHEBI:29105"/>
    </ligand>
</feature>
<feature type="binding site" evidence="2">
    <location>
        <position position="81"/>
    </location>
    <ligand>
        <name>Zn(2+)</name>
        <dbReference type="ChEBI" id="CHEBI:29105"/>
    </ligand>
</feature>
<feature type="binding site" evidence="2">
    <location>
        <position position="150"/>
    </location>
    <ligand>
        <name>Zn(2+)</name>
        <dbReference type="ChEBI" id="CHEBI:29105"/>
    </ligand>
</feature>
<feature type="helix" evidence="3">
    <location>
        <begin position="6"/>
        <end position="19"/>
    </location>
</feature>
<feature type="turn" evidence="3">
    <location>
        <begin position="27"/>
        <end position="31"/>
    </location>
</feature>
<feature type="helix" evidence="3">
    <location>
        <begin position="32"/>
        <end position="43"/>
    </location>
</feature>
<feature type="helix" evidence="3">
    <location>
        <begin position="45"/>
        <end position="48"/>
    </location>
</feature>
<feature type="helix" evidence="3">
    <location>
        <begin position="51"/>
        <end position="55"/>
    </location>
</feature>
<feature type="strand" evidence="3">
    <location>
        <begin position="67"/>
        <end position="78"/>
    </location>
</feature>
<feature type="turn" evidence="3">
    <location>
        <begin position="79"/>
        <end position="81"/>
    </location>
</feature>
<feature type="strand" evidence="3">
    <location>
        <begin position="84"/>
        <end position="94"/>
    </location>
</feature>
<feature type="helix" evidence="3">
    <location>
        <begin position="103"/>
        <end position="114"/>
    </location>
</feature>
<feature type="strand" evidence="3">
    <location>
        <begin position="115"/>
        <end position="118"/>
    </location>
</feature>
<feature type="helix" evidence="3">
    <location>
        <begin position="120"/>
        <end position="135"/>
    </location>
</feature>
<feature type="strand" evidence="3">
    <location>
        <begin position="138"/>
        <end position="148"/>
    </location>
</feature>
<feature type="helix" evidence="3">
    <location>
        <begin position="149"/>
        <end position="152"/>
    </location>
</feature>
<feature type="strand" evidence="3">
    <location>
        <begin position="162"/>
        <end position="170"/>
    </location>
</feature>
<feature type="helix" evidence="3">
    <location>
        <begin position="171"/>
        <end position="174"/>
    </location>
</feature>
<feature type="helix" evidence="3">
    <location>
        <begin position="176"/>
        <end position="187"/>
    </location>
</feature>
<gene>
    <name evidence="2" type="primary">folE</name>
    <name type="ordered locus">lmo1933</name>
</gene>
<comment type="catalytic activity">
    <reaction evidence="2">
        <text>GTP + H2O = 7,8-dihydroneopterin 3'-triphosphate + formate + H(+)</text>
        <dbReference type="Rhea" id="RHEA:17473"/>
        <dbReference type="ChEBI" id="CHEBI:15377"/>
        <dbReference type="ChEBI" id="CHEBI:15378"/>
        <dbReference type="ChEBI" id="CHEBI:15740"/>
        <dbReference type="ChEBI" id="CHEBI:37565"/>
        <dbReference type="ChEBI" id="CHEBI:58462"/>
        <dbReference type="EC" id="3.5.4.16"/>
    </reaction>
</comment>
<comment type="pathway">
    <text evidence="2">Cofactor biosynthesis; 7,8-dihydroneopterin triphosphate biosynthesis; 7,8-dihydroneopterin triphosphate from GTP: step 1/1.</text>
</comment>
<comment type="subunit">
    <text evidence="1">Toroid-shaped homodecamer, composed of two pentamers of five dimers.</text>
</comment>
<comment type="similarity">
    <text evidence="2">Belongs to the GTP cyclohydrolase I family.</text>
</comment>
<evidence type="ECO:0000250" key="1"/>
<evidence type="ECO:0000255" key="2">
    <source>
        <dbReference type="HAMAP-Rule" id="MF_00223"/>
    </source>
</evidence>
<evidence type="ECO:0007829" key="3">
    <source>
        <dbReference type="PDB" id="4UQF"/>
    </source>
</evidence>
<reference key="1">
    <citation type="journal article" date="2001" name="Science">
        <title>Comparative genomics of Listeria species.</title>
        <authorList>
            <person name="Glaser P."/>
            <person name="Frangeul L."/>
            <person name="Buchrieser C."/>
            <person name="Rusniok C."/>
            <person name="Amend A."/>
            <person name="Baquero F."/>
            <person name="Berche P."/>
            <person name="Bloecker H."/>
            <person name="Brandt P."/>
            <person name="Chakraborty T."/>
            <person name="Charbit A."/>
            <person name="Chetouani F."/>
            <person name="Couve E."/>
            <person name="de Daruvar A."/>
            <person name="Dehoux P."/>
            <person name="Domann E."/>
            <person name="Dominguez-Bernal G."/>
            <person name="Duchaud E."/>
            <person name="Durant L."/>
            <person name="Dussurget O."/>
            <person name="Entian K.-D."/>
            <person name="Fsihi H."/>
            <person name="Garcia-del Portillo F."/>
            <person name="Garrido P."/>
            <person name="Gautier L."/>
            <person name="Goebel W."/>
            <person name="Gomez-Lopez N."/>
            <person name="Hain T."/>
            <person name="Hauf J."/>
            <person name="Jackson D."/>
            <person name="Jones L.-M."/>
            <person name="Kaerst U."/>
            <person name="Kreft J."/>
            <person name="Kuhn M."/>
            <person name="Kunst F."/>
            <person name="Kurapkat G."/>
            <person name="Madueno E."/>
            <person name="Maitournam A."/>
            <person name="Mata Vicente J."/>
            <person name="Ng E."/>
            <person name="Nedjari H."/>
            <person name="Nordsiek G."/>
            <person name="Novella S."/>
            <person name="de Pablos B."/>
            <person name="Perez-Diaz J.-C."/>
            <person name="Purcell R."/>
            <person name="Remmel B."/>
            <person name="Rose M."/>
            <person name="Schlueter T."/>
            <person name="Simoes N."/>
            <person name="Tierrez A."/>
            <person name="Vazquez-Boland J.-A."/>
            <person name="Voss H."/>
            <person name="Wehland J."/>
            <person name="Cossart P."/>
        </authorList>
    </citation>
    <scope>NUCLEOTIDE SEQUENCE [LARGE SCALE GENOMIC DNA]</scope>
    <source>
        <strain>ATCC BAA-679 / EGD-e</strain>
    </source>
</reference>
<keyword id="KW-0002">3D-structure</keyword>
<keyword id="KW-0342">GTP-binding</keyword>
<keyword id="KW-0378">Hydrolase</keyword>
<keyword id="KW-0479">Metal-binding</keyword>
<keyword id="KW-0547">Nucleotide-binding</keyword>
<keyword id="KW-0554">One-carbon metabolism</keyword>
<keyword id="KW-1185">Reference proteome</keyword>
<keyword id="KW-0862">Zinc</keyword>
<proteinExistence type="evidence at protein level"/>
<accession>Q8Y5X1</accession>
<sequence>MEQIDKQKIADAVKVILEAVGENPDREGLIDTPMRVARMYEEVFAGLKKDPSVHFDTIFEEQHEELVLVKDIRFSSMCEHHLVPFFGVAHVAYLPQNGRVAGLSKLARVVDDVSRRPQLQERITTTVAEIMMEKLKPLGVMVIMEAEHMCMTIRGVNKPGTKTITSAVRGAFKNDDKLRSEVLALIKHN</sequence>